<sequence length="342" mass="39266">MWNSLKAFALVFGGCCSNVITFETLMSNETGSINNLITFCQFLFVTCQGLPEFLDVHQPFPYFKPLKTPLHVYVITVVLFYISSTTNNNVFKYNISIPIHIVFRCFGTVITMFTCWLLNGRKYTKIQILSTLFLTIGAIIASLFKDADFRYQDLKLQAWKIGSDQSVDLTFIFGICILVLSSFTSSLLSAYNERTYQKYGKHWKENIFYSHFLSLPLFLFSRKQLIHEYRVMRKSERILCSNFGGKILVPREETLLLFNVLTQYFCVKGVNILASKTNALTLSITLLVRKFISLLLSVRLFDNNLSYTGYIGVYLVFFGAFIYSLGSIHPRQNDKGAIKKSK</sequence>
<gene>
    <name type="primary">YEA4</name>
    <name type="ordered locus">YEL004W</name>
</gene>
<reference key="1">
    <citation type="journal article" date="1997" name="Nature">
        <title>The nucleotide sequence of Saccharomyces cerevisiae chromosome V.</title>
        <authorList>
            <person name="Dietrich F.S."/>
            <person name="Mulligan J.T."/>
            <person name="Hennessy K.M."/>
            <person name="Yelton M.A."/>
            <person name="Allen E."/>
            <person name="Araujo R."/>
            <person name="Aviles E."/>
            <person name="Berno A."/>
            <person name="Brennan T."/>
            <person name="Carpenter J."/>
            <person name="Chen E."/>
            <person name="Cherry J.M."/>
            <person name="Chung E."/>
            <person name="Duncan M."/>
            <person name="Guzman E."/>
            <person name="Hartzell G."/>
            <person name="Hunicke-Smith S."/>
            <person name="Hyman R.W."/>
            <person name="Kayser A."/>
            <person name="Komp C."/>
            <person name="Lashkari D."/>
            <person name="Lew H."/>
            <person name="Lin D."/>
            <person name="Mosedale D."/>
            <person name="Nakahara K."/>
            <person name="Namath A."/>
            <person name="Norgren R."/>
            <person name="Oefner P."/>
            <person name="Oh C."/>
            <person name="Petel F.X."/>
            <person name="Roberts D."/>
            <person name="Sehl P."/>
            <person name="Schramm S."/>
            <person name="Shogren T."/>
            <person name="Smith V."/>
            <person name="Taylor P."/>
            <person name="Wei Y."/>
            <person name="Botstein D."/>
            <person name="Davis R.W."/>
        </authorList>
    </citation>
    <scope>NUCLEOTIDE SEQUENCE [LARGE SCALE GENOMIC DNA]</scope>
    <source>
        <strain>ATCC 204508 / S288c</strain>
    </source>
</reference>
<reference key="2">
    <citation type="journal article" date="2014" name="G3 (Bethesda)">
        <title>The reference genome sequence of Saccharomyces cerevisiae: Then and now.</title>
        <authorList>
            <person name="Engel S.R."/>
            <person name="Dietrich F.S."/>
            <person name="Fisk D.G."/>
            <person name="Binkley G."/>
            <person name="Balakrishnan R."/>
            <person name="Costanzo M.C."/>
            <person name="Dwight S.S."/>
            <person name="Hitz B.C."/>
            <person name="Karra K."/>
            <person name="Nash R.S."/>
            <person name="Weng S."/>
            <person name="Wong E.D."/>
            <person name="Lloyd P."/>
            <person name="Skrzypek M.S."/>
            <person name="Miyasato S.R."/>
            <person name="Simison M."/>
            <person name="Cherry J.M."/>
        </authorList>
    </citation>
    <scope>GENOME REANNOTATION</scope>
    <source>
        <strain>ATCC 204508 / S288c</strain>
    </source>
</reference>
<reference key="3">
    <citation type="journal article" date="2000" name="J. Biol. Chem.">
        <title>Characterization of Yeast Yea4p, a uridine diphosphate-N-acetylglucosamine transporter localized in the endoplasmic reticulum and required for chitin synthesis.</title>
        <authorList>
            <person name="Roy S.K."/>
            <person name="Chiba Y."/>
            <person name="Takeuchi M."/>
            <person name="Jigami Y."/>
        </authorList>
    </citation>
    <scope>FUNCTION</scope>
    <scope>SUBCELLULAR LOCATION</scope>
</reference>
<reference key="4">
    <citation type="journal article" date="2006" name="Proc. Natl. Acad. Sci. U.S.A.">
        <title>A global topology map of the Saccharomyces cerevisiae membrane proteome.</title>
        <authorList>
            <person name="Kim H."/>
            <person name="Melen K."/>
            <person name="Oesterberg M."/>
            <person name="von Heijne G."/>
        </authorList>
    </citation>
    <scope>TOPOLOGY [LARGE SCALE ANALYSIS]</scope>
    <source>
        <strain>ATCC 208353 / W303-1A</strain>
    </source>
</reference>
<keyword id="KW-0256">Endoplasmic reticulum</keyword>
<keyword id="KW-0472">Membrane</keyword>
<keyword id="KW-1185">Reference proteome</keyword>
<keyword id="KW-0762">Sugar transport</keyword>
<keyword id="KW-0812">Transmembrane</keyword>
<keyword id="KW-1133">Transmembrane helix</keyword>
<keyword id="KW-0813">Transport</keyword>
<comment type="function">
    <text evidence="2">Sugar transporter that specifically mediates the transport of UDP-N-acetylglucosamine (UDP-GlcNAc) and is required for cell wall chitin synthesis.</text>
</comment>
<comment type="subcellular location">
    <subcellularLocation>
        <location evidence="2">Endoplasmic reticulum</location>
    </subcellularLocation>
    <subcellularLocation>
        <location evidence="3">Endoplasmic reticulum membrane</location>
        <topology evidence="3">Multi-pass membrane protein</topology>
    </subcellularLocation>
</comment>
<comment type="similarity">
    <text evidence="3">Belongs to the nucleotide-sugar transporter family. SLC35B subfamily.</text>
</comment>
<accession>P40004</accession>
<accession>D3DLP3</accession>
<proteinExistence type="evidence at protein level"/>
<protein>
    <recommendedName>
        <fullName>UDP-N-acetylglucosamine transporter YEA4</fullName>
    </recommendedName>
</protein>
<feature type="chain" id="PRO_0000213361" description="UDP-N-acetylglucosamine transporter YEA4">
    <location>
        <begin position="1"/>
        <end position="342"/>
    </location>
</feature>
<feature type="topological domain" description="Cytoplasmic" evidence="1">
    <location>
        <begin position="1"/>
        <end position="6"/>
    </location>
</feature>
<feature type="transmembrane region" description="Helical" evidence="1">
    <location>
        <begin position="7"/>
        <end position="27"/>
    </location>
</feature>
<feature type="topological domain" description="Lumenal" evidence="1">
    <location>
        <begin position="28"/>
        <end position="35"/>
    </location>
</feature>
<feature type="transmembrane region" description="Helical" evidence="1">
    <location>
        <begin position="36"/>
        <end position="56"/>
    </location>
</feature>
<feature type="topological domain" description="Cytoplasmic" evidence="1">
    <location>
        <begin position="57"/>
        <end position="61"/>
    </location>
</feature>
<feature type="transmembrane region" description="Helical" evidence="1">
    <location>
        <begin position="62"/>
        <end position="82"/>
    </location>
</feature>
<feature type="topological domain" description="Lumenal" evidence="1">
    <location>
        <begin position="83"/>
        <end position="96"/>
    </location>
</feature>
<feature type="transmembrane region" description="Helical" evidence="1">
    <location>
        <begin position="97"/>
        <end position="117"/>
    </location>
</feature>
<feature type="topological domain" description="Cytoplasmic" evidence="1">
    <location>
        <begin position="118"/>
        <end position="123"/>
    </location>
</feature>
<feature type="transmembrane region" description="Helical" evidence="1">
    <location>
        <begin position="124"/>
        <end position="144"/>
    </location>
</feature>
<feature type="topological domain" description="Lumenal" evidence="1">
    <location>
        <begin position="145"/>
        <end position="168"/>
    </location>
</feature>
<feature type="transmembrane region" description="Helical" evidence="1">
    <location>
        <begin position="169"/>
        <end position="189"/>
    </location>
</feature>
<feature type="topological domain" description="Cytoplasmic" evidence="1">
    <location>
        <begin position="190"/>
        <end position="253"/>
    </location>
</feature>
<feature type="transmembrane region" description="Helical" evidence="1">
    <location>
        <begin position="254"/>
        <end position="274"/>
    </location>
</feature>
<feature type="topological domain" description="Lumenal" evidence="1">
    <location>
        <begin position="275"/>
        <end position="307"/>
    </location>
</feature>
<feature type="transmembrane region" description="Helical" evidence="1">
    <location>
        <begin position="308"/>
        <end position="328"/>
    </location>
</feature>
<feature type="topological domain" description="Cytoplasmic" evidence="1">
    <location>
        <begin position="329"/>
        <end position="342"/>
    </location>
</feature>
<dbReference type="EMBL" id="U18530">
    <property type="protein sequence ID" value="AAB64481.1"/>
    <property type="molecule type" value="Genomic_DNA"/>
</dbReference>
<dbReference type="EMBL" id="BK006939">
    <property type="protein sequence ID" value="DAA07647.1"/>
    <property type="molecule type" value="Genomic_DNA"/>
</dbReference>
<dbReference type="PIR" id="S50455">
    <property type="entry name" value="S50455"/>
</dbReference>
<dbReference type="RefSeq" id="NP_010912.1">
    <property type="nucleotide sequence ID" value="NM_001178819.1"/>
</dbReference>
<dbReference type="SMR" id="P40004"/>
<dbReference type="BioGRID" id="36727">
    <property type="interactions" value="47"/>
</dbReference>
<dbReference type="DIP" id="DIP-8273N"/>
<dbReference type="FunCoup" id="P40004">
    <property type="interactions" value="201"/>
</dbReference>
<dbReference type="IntAct" id="P40004">
    <property type="interactions" value="1"/>
</dbReference>
<dbReference type="MINT" id="P40004"/>
<dbReference type="STRING" id="4932.YEL004W"/>
<dbReference type="TCDB" id="2.A.7.10.5">
    <property type="family name" value="the drug/metabolite transporter (dmt) superfamily"/>
</dbReference>
<dbReference type="PaxDb" id="4932-YEL004W"/>
<dbReference type="PeptideAtlas" id="P40004"/>
<dbReference type="EnsemblFungi" id="YEL004W_mRNA">
    <property type="protein sequence ID" value="YEL004W"/>
    <property type="gene ID" value="YEL004W"/>
</dbReference>
<dbReference type="GeneID" id="856714"/>
<dbReference type="KEGG" id="sce:YEL004W"/>
<dbReference type="AGR" id="SGD:S000000730"/>
<dbReference type="SGD" id="S000000730">
    <property type="gene designation" value="YEA4"/>
</dbReference>
<dbReference type="VEuPathDB" id="FungiDB:YEL004W"/>
<dbReference type="eggNOG" id="KOG1583">
    <property type="taxonomic scope" value="Eukaryota"/>
</dbReference>
<dbReference type="GeneTree" id="ENSGT00390000002915"/>
<dbReference type="HOGENOM" id="CLU_033007_1_1_1"/>
<dbReference type="InParanoid" id="P40004"/>
<dbReference type="OMA" id="NPFTGWH"/>
<dbReference type="OrthoDB" id="999962at2759"/>
<dbReference type="BioCyc" id="YEAST:G3O-30133-MONOMER"/>
<dbReference type="Reactome" id="R-SCE-727802">
    <property type="pathway name" value="Transport of nucleotide sugars"/>
</dbReference>
<dbReference type="BioGRID-ORCS" id="856714">
    <property type="hits" value="0 hits in 10 CRISPR screens"/>
</dbReference>
<dbReference type="PRO" id="PR:P40004"/>
<dbReference type="Proteomes" id="UP000002311">
    <property type="component" value="Chromosome V"/>
</dbReference>
<dbReference type="RNAct" id="P40004">
    <property type="molecule type" value="protein"/>
</dbReference>
<dbReference type="GO" id="GO:0005783">
    <property type="term" value="C:endoplasmic reticulum"/>
    <property type="evidence" value="ECO:0000314"/>
    <property type="project" value="SGD"/>
</dbReference>
<dbReference type="GO" id="GO:0005789">
    <property type="term" value="C:endoplasmic reticulum membrane"/>
    <property type="evidence" value="ECO:0000318"/>
    <property type="project" value="GO_Central"/>
</dbReference>
<dbReference type="GO" id="GO:0000139">
    <property type="term" value="C:Golgi membrane"/>
    <property type="evidence" value="ECO:0000318"/>
    <property type="project" value="GO_Central"/>
</dbReference>
<dbReference type="GO" id="GO:0005462">
    <property type="term" value="F:UDP-N-acetylglucosamine transmembrane transporter activity"/>
    <property type="evidence" value="ECO:0000315"/>
    <property type="project" value="SGD"/>
</dbReference>
<dbReference type="GO" id="GO:0005464">
    <property type="term" value="F:UDP-xylose transmembrane transporter activity"/>
    <property type="evidence" value="ECO:0000318"/>
    <property type="project" value="GO_Central"/>
</dbReference>
<dbReference type="GO" id="GO:0006031">
    <property type="term" value="P:chitin biosynthetic process"/>
    <property type="evidence" value="ECO:0000315"/>
    <property type="project" value="SGD"/>
</dbReference>
<dbReference type="GO" id="GO:0055085">
    <property type="term" value="P:transmembrane transport"/>
    <property type="evidence" value="ECO:0000315"/>
    <property type="project" value="SGD"/>
</dbReference>
<dbReference type="GO" id="GO:0015786">
    <property type="term" value="P:UDP-glucose transmembrane transport"/>
    <property type="evidence" value="ECO:0000315"/>
    <property type="project" value="SGD"/>
</dbReference>
<dbReference type="GO" id="GO:1990569">
    <property type="term" value="P:UDP-N-acetylglucosamine transmembrane transport"/>
    <property type="evidence" value="ECO:0000315"/>
    <property type="project" value="SGD"/>
</dbReference>
<dbReference type="InterPro" id="IPR013657">
    <property type="entry name" value="SCL35B1-4/HUT1"/>
</dbReference>
<dbReference type="NCBIfam" id="TIGR00803">
    <property type="entry name" value="nst"/>
    <property type="match status" value="1"/>
</dbReference>
<dbReference type="PANTHER" id="PTHR10778:SF4">
    <property type="entry name" value="NUCLEOTIDE SUGAR TRANSPORTER SLC35B4"/>
    <property type="match status" value="1"/>
</dbReference>
<dbReference type="PANTHER" id="PTHR10778">
    <property type="entry name" value="SOLUTE CARRIER FAMILY 35 MEMBER B"/>
    <property type="match status" value="1"/>
</dbReference>
<dbReference type="Pfam" id="PF08449">
    <property type="entry name" value="UAA"/>
    <property type="match status" value="1"/>
</dbReference>
<organism>
    <name type="scientific">Saccharomyces cerevisiae (strain ATCC 204508 / S288c)</name>
    <name type="common">Baker's yeast</name>
    <dbReference type="NCBI Taxonomy" id="559292"/>
    <lineage>
        <taxon>Eukaryota</taxon>
        <taxon>Fungi</taxon>
        <taxon>Dikarya</taxon>
        <taxon>Ascomycota</taxon>
        <taxon>Saccharomycotina</taxon>
        <taxon>Saccharomycetes</taxon>
        <taxon>Saccharomycetales</taxon>
        <taxon>Saccharomycetaceae</taxon>
        <taxon>Saccharomyces</taxon>
    </lineage>
</organism>
<name>YEA4_YEAST</name>
<evidence type="ECO:0000255" key="1"/>
<evidence type="ECO:0000269" key="2">
    <source>
    </source>
</evidence>
<evidence type="ECO:0000305" key="3"/>